<protein>
    <recommendedName>
        <fullName evidence="1">Large ribosomal subunit protein bL9</fullName>
    </recommendedName>
    <alternativeName>
        <fullName evidence="2">50S ribosomal protein L9</fullName>
    </alternativeName>
</protein>
<name>RL9_ALIFM</name>
<reference key="1">
    <citation type="submission" date="2008-08" db="EMBL/GenBank/DDBJ databases">
        <title>Complete sequence of Vibrio fischeri strain MJ11.</title>
        <authorList>
            <person name="Mandel M.J."/>
            <person name="Stabb E.V."/>
            <person name="Ruby E.G."/>
            <person name="Ferriera S."/>
            <person name="Johnson J."/>
            <person name="Kravitz S."/>
            <person name="Beeson K."/>
            <person name="Sutton G."/>
            <person name="Rogers Y.-H."/>
            <person name="Friedman R."/>
            <person name="Frazier M."/>
            <person name="Venter J.C."/>
        </authorList>
    </citation>
    <scope>NUCLEOTIDE SEQUENCE [LARGE SCALE GENOMIC DNA]</scope>
    <source>
        <strain>MJ11</strain>
    </source>
</reference>
<keyword id="KW-0687">Ribonucleoprotein</keyword>
<keyword id="KW-0689">Ribosomal protein</keyword>
<keyword id="KW-0694">RNA-binding</keyword>
<keyword id="KW-0699">rRNA-binding</keyword>
<sequence length="149" mass="15713">MQVILLDKIGNLGSLGDQVNVKAGYARNFLIPQGKAVMATKANVEMFETRRAELEANVAKQLAAAEARAEKVNALEVTIASKSGDEGKLFGSIGTRDIAEAATAAGVEIAKSEVRLPEGALRTTGSFEVSIQLHSEVFATLKLEVVAAE</sequence>
<evidence type="ECO:0000255" key="1">
    <source>
        <dbReference type="HAMAP-Rule" id="MF_00503"/>
    </source>
</evidence>
<evidence type="ECO:0000305" key="2"/>
<comment type="function">
    <text evidence="1">Binds to the 23S rRNA.</text>
</comment>
<comment type="similarity">
    <text evidence="1">Belongs to the bacterial ribosomal protein bL9 family.</text>
</comment>
<feature type="chain" id="PRO_1000126992" description="Large ribosomal subunit protein bL9">
    <location>
        <begin position="1"/>
        <end position="149"/>
    </location>
</feature>
<dbReference type="EMBL" id="CP001139">
    <property type="protein sequence ID" value="ACH66443.1"/>
    <property type="molecule type" value="Genomic_DNA"/>
</dbReference>
<dbReference type="RefSeq" id="WP_005421134.1">
    <property type="nucleotide sequence ID" value="NC_011184.1"/>
</dbReference>
<dbReference type="SMR" id="B5FBQ0"/>
<dbReference type="GeneID" id="54165025"/>
<dbReference type="KEGG" id="vfm:VFMJ11_2422"/>
<dbReference type="HOGENOM" id="CLU_078938_4_1_6"/>
<dbReference type="Proteomes" id="UP000001857">
    <property type="component" value="Chromosome I"/>
</dbReference>
<dbReference type="GO" id="GO:1990904">
    <property type="term" value="C:ribonucleoprotein complex"/>
    <property type="evidence" value="ECO:0007669"/>
    <property type="project" value="UniProtKB-KW"/>
</dbReference>
<dbReference type="GO" id="GO:0005840">
    <property type="term" value="C:ribosome"/>
    <property type="evidence" value="ECO:0007669"/>
    <property type="project" value="UniProtKB-KW"/>
</dbReference>
<dbReference type="GO" id="GO:0019843">
    <property type="term" value="F:rRNA binding"/>
    <property type="evidence" value="ECO:0007669"/>
    <property type="project" value="UniProtKB-UniRule"/>
</dbReference>
<dbReference type="GO" id="GO:0003735">
    <property type="term" value="F:structural constituent of ribosome"/>
    <property type="evidence" value="ECO:0007669"/>
    <property type="project" value="InterPro"/>
</dbReference>
<dbReference type="GO" id="GO:0006412">
    <property type="term" value="P:translation"/>
    <property type="evidence" value="ECO:0007669"/>
    <property type="project" value="UniProtKB-UniRule"/>
</dbReference>
<dbReference type="FunFam" id="3.10.430.100:FF:000001">
    <property type="entry name" value="50S ribosomal protein L9"/>
    <property type="match status" value="1"/>
</dbReference>
<dbReference type="FunFam" id="3.40.5.10:FF:000001">
    <property type="entry name" value="50S ribosomal protein L9"/>
    <property type="match status" value="1"/>
</dbReference>
<dbReference type="Gene3D" id="3.10.430.100">
    <property type="entry name" value="Ribosomal protein L9, C-terminal domain"/>
    <property type="match status" value="1"/>
</dbReference>
<dbReference type="Gene3D" id="3.40.5.10">
    <property type="entry name" value="Ribosomal protein L9, N-terminal domain"/>
    <property type="match status" value="1"/>
</dbReference>
<dbReference type="HAMAP" id="MF_00503">
    <property type="entry name" value="Ribosomal_bL9"/>
    <property type="match status" value="1"/>
</dbReference>
<dbReference type="InterPro" id="IPR000244">
    <property type="entry name" value="Ribosomal_bL9"/>
</dbReference>
<dbReference type="InterPro" id="IPR009027">
    <property type="entry name" value="Ribosomal_bL9/RNase_H1_N"/>
</dbReference>
<dbReference type="InterPro" id="IPR020594">
    <property type="entry name" value="Ribosomal_bL9_bac/chp"/>
</dbReference>
<dbReference type="InterPro" id="IPR020069">
    <property type="entry name" value="Ribosomal_bL9_C"/>
</dbReference>
<dbReference type="InterPro" id="IPR036791">
    <property type="entry name" value="Ribosomal_bL9_C_sf"/>
</dbReference>
<dbReference type="InterPro" id="IPR020070">
    <property type="entry name" value="Ribosomal_bL9_N"/>
</dbReference>
<dbReference type="InterPro" id="IPR036935">
    <property type="entry name" value="Ribosomal_bL9_N_sf"/>
</dbReference>
<dbReference type="NCBIfam" id="TIGR00158">
    <property type="entry name" value="L9"/>
    <property type="match status" value="1"/>
</dbReference>
<dbReference type="PANTHER" id="PTHR21368">
    <property type="entry name" value="50S RIBOSOMAL PROTEIN L9"/>
    <property type="match status" value="1"/>
</dbReference>
<dbReference type="Pfam" id="PF03948">
    <property type="entry name" value="Ribosomal_L9_C"/>
    <property type="match status" value="1"/>
</dbReference>
<dbReference type="Pfam" id="PF01281">
    <property type="entry name" value="Ribosomal_L9_N"/>
    <property type="match status" value="1"/>
</dbReference>
<dbReference type="SUPFAM" id="SSF55658">
    <property type="entry name" value="L9 N-domain-like"/>
    <property type="match status" value="1"/>
</dbReference>
<dbReference type="SUPFAM" id="SSF55653">
    <property type="entry name" value="Ribosomal protein L9 C-domain"/>
    <property type="match status" value="1"/>
</dbReference>
<dbReference type="PROSITE" id="PS00651">
    <property type="entry name" value="RIBOSOMAL_L9"/>
    <property type="match status" value="1"/>
</dbReference>
<accession>B5FBQ0</accession>
<organism>
    <name type="scientific">Aliivibrio fischeri (strain MJ11)</name>
    <name type="common">Vibrio fischeri</name>
    <dbReference type="NCBI Taxonomy" id="388396"/>
    <lineage>
        <taxon>Bacteria</taxon>
        <taxon>Pseudomonadati</taxon>
        <taxon>Pseudomonadota</taxon>
        <taxon>Gammaproteobacteria</taxon>
        <taxon>Vibrionales</taxon>
        <taxon>Vibrionaceae</taxon>
        <taxon>Aliivibrio</taxon>
    </lineage>
</organism>
<gene>
    <name evidence="1" type="primary">rplI</name>
    <name type="ordered locus">VFMJ11_2422</name>
</gene>
<proteinExistence type="inferred from homology"/>